<proteinExistence type="inferred from homology"/>
<gene>
    <name evidence="1" type="primary">pdaD</name>
    <name type="ordered locus">Clim_0527</name>
</gene>
<keyword id="KW-0210">Decarboxylase</keyword>
<keyword id="KW-0456">Lyase</keyword>
<keyword id="KW-0670">Pyruvate</keyword>
<name>PDAD_CHLL2</name>
<sequence length="181" mass="20014">MSFVPTKVFFTKGVGRHKEYLSSFELALRDAKIEKCNLVTVSSIFPPKCERISVEEGLKLLSPGQITFAVMARNATNEYNRLISASVGVAIPADDTQYGYLSEHHPYGESDEQCGEYAEDLAATMLATTLGIEFDPNKDWDEREGIYKMSGKIINSYNITQSAEGENGLWTTVISCAVLLP</sequence>
<comment type="catalytic activity">
    <reaction evidence="1">
        <text>L-arginine + H(+) = agmatine + CO2</text>
        <dbReference type="Rhea" id="RHEA:17641"/>
        <dbReference type="ChEBI" id="CHEBI:15378"/>
        <dbReference type="ChEBI" id="CHEBI:16526"/>
        <dbReference type="ChEBI" id="CHEBI:32682"/>
        <dbReference type="ChEBI" id="CHEBI:58145"/>
        <dbReference type="EC" id="4.1.1.19"/>
    </reaction>
</comment>
<comment type="cofactor">
    <cofactor evidence="1">
        <name>pyruvate</name>
        <dbReference type="ChEBI" id="CHEBI:15361"/>
    </cofactor>
    <text evidence="1">Binds 1 pyruvoyl group covalently per subunit.</text>
</comment>
<comment type="similarity">
    <text evidence="1">Belongs to the PdaD family.</text>
</comment>
<protein>
    <recommendedName>
        <fullName evidence="1">Probable pyruvoyl-dependent arginine decarboxylase</fullName>
        <shortName evidence="1">PvlArgDC</shortName>
        <ecNumber evidence="1">4.1.1.19</ecNumber>
    </recommendedName>
    <component>
        <recommendedName>
            <fullName evidence="1">Pyruvoyl-dependent arginine decarboxylase subunit beta</fullName>
        </recommendedName>
    </component>
    <component>
        <recommendedName>
            <fullName evidence="1">Pyruvoyl-dependent arginine decarboxylase subunit alpha</fullName>
        </recommendedName>
    </component>
</protein>
<feature type="chain" id="PRO_1000145460" description="Pyruvoyl-dependent arginine decarboxylase subunit beta" evidence="1">
    <location>
        <begin position="1"/>
        <end position="42"/>
    </location>
</feature>
<feature type="chain" id="PRO_1000145461" description="Pyruvoyl-dependent arginine decarboxylase subunit alpha" evidence="1">
    <location>
        <begin position="43"/>
        <end position="181"/>
    </location>
</feature>
<feature type="site" description="Cleavage (non-hydrolytic)" evidence="1">
    <location>
        <begin position="42"/>
        <end position="43"/>
    </location>
</feature>
<feature type="modified residue" description="Pyruvic acid (Ser)" evidence="1">
    <location>
        <position position="43"/>
    </location>
</feature>
<organism>
    <name type="scientific">Chlorobium limicola (strain DSM 245 / NBRC 103803 / 6330)</name>
    <dbReference type="NCBI Taxonomy" id="290315"/>
    <lineage>
        <taxon>Bacteria</taxon>
        <taxon>Pseudomonadati</taxon>
        <taxon>Chlorobiota</taxon>
        <taxon>Chlorobiia</taxon>
        <taxon>Chlorobiales</taxon>
        <taxon>Chlorobiaceae</taxon>
        <taxon>Chlorobium/Pelodictyon group</taxon>
        <taxon>Chlorobium</taxon>
    </lineage>
</organism>
<dbReference type="EC" id="4.1.1.19" evidence="1"/>
<dbReference type="EMBL" id="CP001097">
    <property type="protein sequence ID" value="ACD89619.1"/>
    <property type="molecule type" value="Genomic_DNA"/>
</dbReference>
<dbReference type="RefSeq" id="WP_012465500.1">
    <property type="nucleotide sequence ID" value="NC_010803.1"/>
</dbReference>
<dbReference type="SMR" id="B3EGI2"/>
<dbReference type="STRING" id="290315.Clim_0527"/>
<dbReference type="KEGG" id="cli:Clim_0527"/>
<dbReference type="eggNOG" id="COG1945">
    <property type="taxonomic scope" value="Bacteria"/>
</dbReference>
<dbReference type="HOGENOM" id="CLU_114389_0_0_10"/>
<dbReference type="OrthoDB" id="9783061at2"/>
<dbReference type="Proteomes" id="UP000008841">
    <property type="component" value="Chromosome"/>
</dbReference>
<dbReference type="GO" id="GO:0008792">
    <property type="term" value="F:arginine decarboxylase activity"/>
    <property type="evidence" value="ECO:0007669"/>
    <property type="project" value="UniProtKB-UniRule"/>
</dbReference>
<dbReference type="GO" id="GO:0006527">
    <property type="term" value="P:arginine catabolic process"/>
    <property type="evidence" value="ECO:0007669"/>
    <property type="project" value="InterPro"/>
</dbReference>
<dbReference type="Gene3D" id="3.50.20.10">
    <property type="entry name" value="Pyruvoyl-Dependent Histidine Decarboxylase, subunit B"/>
    <property type="match status" value="1"/>
</dbReference>
<dbReference type="HAMAP" id="MF_01404">
    <property type="entry name" value="PvlArgDC"/>
    <property type="match status" value="1"/>
</dbReference>
<dbReference type="InterPro" id="IPR016104">
    <property type="entry name" value="Pyr-dep_his/arg-deCO2ase"/>
</dbReference>
<dbReference type="InterPro" id="IPR016105">
    <property type="entry name" value="Pyr-dep_his/arg-deCO2ase_sand"/>
</dbReference>
<dbReference type="InterPro" id="IPR002724">
    <property type="entry name" value="Pyruvoyl-dep_arg_deCO2ase"/>
</dbReference>
<dbReference type="NCBIfam" id="TIGR00286">
    <property type="entry name" value="pyruvoyl-dependent arginine decarboxylase"/>
    <property type="match status" value="1"/>
</dbReference>
<dbReference type="PANTHER" id="PTHR40438">
    <property type="entry name" value="PYRUVOYL-DEPENDENT ARGININE DECARBOXYLASE"/>
    <property type="match status" value="1"/>
</dbReference>
<dbReference type="PANTHER" id="PTHR40438:SF1">
    <property type="entry name" value="PYRUVOYL-DEPENDENT ARGININE DECARBOXYLASE"/>
    <property type="match status" value="1"/>
</dbReference>
<dbReference type="Pfam" id="PF01862">
    <property type="entry name" value="PvlArgDC"/>
    <property type="match status" value="1"/>
</dbReference>
<dbReference type="PIRSF" id="PIRSF005216">
    <property type="entry name" value="Pyruvoyl-dep_arg_deCO2ase"/>
    <property type="match status" value="1"/>
</dbReference>
<dbReference type="SFLD" id="SFLDG01170">
    <property type="entry name" value="Pyruvoyl-dependent_arginine_de"/>
    <property type="match status" value="1"/>
</dbReference>
<dbReference type="SFLD" id="SFLDS00055">
    <property type="entry name" value="Pyruvoyl-Dependent_Histidine/A"/>
    <property type="match status" value="1"/>
</dbReference>
<dbReference type="SUPFAM" id="SSF56271">
    <property type="entry name" value="Pyruvoyl-dependent histidine and arginine decarboxylases"/>
    <property type="match status" value="1"/>
</dbReference>
<evidence type="ECO:0000255" key="1">
    <source>
        <dbReference type="HAMAP-Rule" id="MF_01404"/>
    </source>
</evidence>
<reference key="1">
    <citation type="submission" date="2008-05" db="EMBL/GenBank/DDBJ databases">
        <title>Complete sequence of Chlorobium limicola DSM 245.</title>
        <authorList>
            <consortium name="US DOE Joint Genome Institute"/>
            <person name="Lucas S."/>
            <person name="Copeland A."/>
            <person name="Lapidus A."/>
            <person name="Glavina del Rio T."/>
            <person name="Dalin E."/>
            <person name="Tice H."/>
            <person name="Bruce D."/>
            <person name="Goodwin L."/>
            <person name="Pitluck S."/>
            <person name="Schmutz J."/>
            <person name="Larimer F."/>
            <person name="Land M."/>
            <person name="Hauser L."/>
            <person name="Kyrpides N."/>
            <person name="Ovchinnikova G."/>
            <person name="Zhao F."/>
            <person name="Li T."/>
            <person name="Liu Z."/>
            <person name="Overmann J."/>
            <person name="Bryant D.A."/>
            <person name="Richardson P."/>
        </authorList>
    </citation>
    <scope>NUCLEOTIDE SEQUENCE [LARGE SCALE GENOMIC DNA]</scope>
    <source>
        <strain>DSM 245 / NBRC 103803 / 6330</strain>
    </source>
</reference>
<accession>B3EGI2</accession>